<protein>
    <recommendedName>
        <fullName evidence="1">UPF0336 protein CMM_2793</fullName>
    </recommendedName>
</protein>
<proteinExistence type="inferred from homology"/>
<organism>
    <name type="scientific">Clavibacter michiganensis subsp. michiganensis (strain NCPPB 382)</name>
    <dbReference type="NCBI Taxonomy" id="443906"/>
    <lineage>
        <taxon>Bacteria</taxon>
        <taxon>Bacillati</taxon>
        <taxon>Actinomycetota</taxon>
        <taxon>Actinomycetes</taxon>
        <taxon>Micrococcales</taxon>
        <taxon>Microbacteriaceae</taxon>
        <taxon>Clavibacter</taxon>
    </lineage>
</organism>
<sequence length="149" mass="15411">MPVNPELQGRVLPAAAPYLVGREKVREFARAVGATHPVHLDPEAARAAGHADVVAPSTFPVVLQAMTVTQLLAEPDTGIDYSRVVHGEQAFTYTRPVVAGDELTATLTVTKVATLGGNAMVTAESAMVDGSGAHVVTAVSTLVVRGDDA</sequence>
<dbReference type="EMBL" id="AM711867">
    <property type="protein sequence ID" value="CAN02878.1"/>
    <property type="molecule type" value="Genomic_DNA"/>
</dbReference>
<dbReference type="RefSeq" id="WP_012039482.1">
    <property type="nucleotide sequence ID" value="NC_009480.1"/>
</dbReference>
<dbReference type="SMR" id="A5CUU0"/>
<dbReference type="GeneID" id="92948805"/>
<dbReference type="KEGG" id="cmi:CMM_2793"/>
<dbReference type="eggNOG" id="COG2030">
    <property type="taxonomic scope" value="Bacteria"/>
</dbReference>
<dbReference type="HOGENOM" id="CLU_116276_0_0_11"/>
<dbReference type="OrthoDB" id="5415111at2"/>
<dbReference type="Proteomes" id="UP000001564">
    <property type="component" value="Chromosome"/>
</dbReference>
<dbReference type="GO" id="GO:0019171">
    <property type="term" value="F:(3R)-hydroxyacyl-[acyl-carrier-protein] dehydratase activity"/>
    <property type="evidence" value="ECO:0007669"/>
    <property type="project" value="TreeGrafter"/>
</dbReference>
<dbReference type="GO" id="GO:0006633">
    <property type="term" value="P:fatty acid biosynthetic process"/>
    <property type="evidence" value="ECO:0007669"/>
    <property type="project" value="TreeGrafter"/>
</dbReference>
<dbReference type="CDD" id="cd03441">
    <property type="entry name" value="R_hydratase_like"/>
    <property type="match status" value="1"/>
</dbReference>
<dbReference type="Gene3D" id="3.10.129.10">
    <property type="entry name" value="Hotdog Thioesterase"/>
    <property type="match status" value="1"/>
</dbReference>
<dbReference type="HAMAP" id="MF_00799">
    <property type="entry name" value="UPF0336"/>
    <property type="match status" value="1"/>
</dbReference>
<dbReference type="InterPro" id="IPR039569">
    <property type="entry name" value="FAS1-like_DH_region"/>
</dbReference>
<dbReference type="InterPro" id="IPR016709">
    <property type="entry name" value="HadA-like"/>
</dbReference>
<dbReference type="InterPro" id="IPR029069">
    <property type="entry name" value="HotDog_dom_sf"/>
</dbReference>
<dbReference type="InterPro" id="IPR050965">
    <property type="entry name" value="UPF0336/Enoyl-CoA_hydratase"/>
</dbReference>
<dbReference type="PANTHER" id="PTHR43437:SF3">
    <property type="entry name" value="HYDROXYACYL-THIOESTER DEHYDRATASE TYPE 2, MITOCHONDRIAL"/>
    <property type="match status" value="1"/>
</dbReference>
<dbReference type="PANTHER" id="PTHR43437">
    <property type="entry name" value="HYDROXYACYL-THIOESTER DEHYDRATASE TYPE 2, MITOCHONDRIAL-RELATED"/>
    <property type="match status" value="1"/>
</dbReference>
<dbReference type="Pfam" id="PF13452">
    <property type="entry name" value="FAS1_DH_region"/>
    <property type="match status" value="1"/>
</dbReference>
<dbReference type="PIRSF" id="PIRSF018072">
    <property type="entry name" value="UCP018072"/>
    <property type="match status" value="1"/>
</dbReference>
<dbReference type="SUPFAM" id="SSF54637">
    <property type="entry name" value="Thioesterase/thiol ester dehydrase-isomerase"/>
    <property type="match status" value="1"/>
</dbReference>
<feature type="chain" id="PRO_1000046971" description="UPF0336 protein CMM_2793">
    <location>
        <begin position="1"/>
        <end position="149"/>
    </location>
</feature>
<feature type="domain" description="MaoC-like">
    <location>
        <begin position="16"/>
        <end position="117"/>
    </location>
</feature>
<evidence type="ECO:0000255" key="1">
    <source>
        <dbReference type="HAMAP-Rule" id="MF_00799"/>
    </source>
</evidence>
<reference key="1">
    <citation type="journal article" date="2008" name="J. Bacteriol.">
        <title>The genome sequence of the tomato-pathogenic actinomycete Clavibacter michiganensis subsp. michiganensis NCPPB382 reveals a large island involved in pathogenicity.</title>
        <authorList>
            <person name="Gartemann K.-H."/>
            <person name="Abt B."/>
            <person name="Bekel T."/>
            <person name="Burger A."/>
            <person name="Engemann J."/>
            <person name="Fluegel M."/>
            <person name="Gaigalat L."/>
            <person name="Goesmann A."/>
            <person name="Graefen I."/>
            <person name="Kalinowski J."/>
            <person name="Kaup O."/>
            <person name="Kirchner O."/>
            <person name="Krause L."/>
            <person name="Linke B."/>
            <person name="McHardy A."/>
            <person name="Meyer F."/>
            <person name="Pohle S."/>
            <person name="Rueckert C."/>
            <person name="Schneiker S."/>
            <person name="Zellermann E.-M."/>
            <person name="Puehler A."/>
            <person name="Eichenlaub R."/>
            <person name="Kaiser O."/>
            <person name="Bartels D."/>
        </authorList>
    </citation>
    <scope>NUCLEOTIDE SEQUENCE [LARGE SCALE GENOMIC DNA]</scope>
    <source>
        <strain>NCPPB 382</strain>
    </source>
</reference>
<accession>A5CUU0</accession>
<gene>
    <name type="ordered locus">CMM_2793</name>
</gene>
<name>Y2793_CLAM3</name>
<comment type="similarity">
    <text evidence="1">Belongs to the UPF0336 family.</text>
</comment>